<keyword id="KW-0030">Aminoacyl-tRNA synthetase</keyword>
<keyword id="KW-0067">ATP-binding</keyword>
<keyword id="KW-0963">Cytoplasm</keyword>
<keyword id="KW-0436">Ligase</keyword>
<keyword id="KW-0547">Nucleotide-binding</keyword>
<keyword id="KW-0648">Protein biosynthesis</keyword>
<evidence type="ECO:0000255" key="1">
    <source>
        <dbReference type="HAMAP-Rule" id="MF_00022"/>
    </source>
</evidence>
<accession>Q83HJ1</accession>
<dbReference type="EC" id="6.1.1.17" evidence="1"/>
<dbReference type="EMBL" id="BX251411">
    <property type="protein sequence ID" value="CAD67229.1"/>
    <property type="molecule type" value="Genomic_DNA"/>
</dbReference>
<dbReference type="RefSeq" id="WP_011096509.1">
    <property type="nucleotide sequence ID" value="NC_004551.1"/>
</dbReference>
<dbReference type="SMR" id="Q83HJ1"/>
<dbReference type="GeneID" id="67388342"/>
<dbReference type="KEGG" id="tws:TW563"/>
<dbReference type="HOGENOM" id="CLU_015768_6_3_11"/>
<dbReference type="GO" id="GO:0005829">
    <property type="term" value="C:cytosol"/>
    <property type="evidence" value="ECO:0007669"/>
    <property type="project" value="TreeGrafter"/>
</dbReference>
<dbReference type="GO" id="GO:0005524">
    <property type="term" value="F:ATP binding"/>
    <property type="evidence" value="ECO:0007669"/>
    <property type="project" value="UniProtKB-UniRule"/>
</dbReference>
<dbReference type="GO" id="GO:0004818">
    <property type="term" value="F:glutamate-tRNA ligase activity"/>
    <property type="evidence" value="ECO:0007669"/>
    <property type="project" value="UniProtKB-UniRule"/>
</dbReference>
<dbReference type="GO" id="GO:0000049">
    <property type="term" value="F:tRNA binding"/>
    <property type="evidence" value="ECO:0007669"/>
    <property type="project" value="InterPro"/>
</dbReference>
<dbReference type="GO" id="GO:0008270">
    <property type="term" value="F:zinc ion binding"/>
    <property type="evidence" value="ECO:0007669"/>
    <property type="project" value="InterPro"/>
</dbReference>
<dbReference type="GO" id="GO:0006424">
    <property type="term" value="P:glutamyl-tRNA aminoacylation"/>
    <property type="evidence" value="ECO:0007669"/>
    <property type="project" value="UniProtKB-UniRule"/>
</dbReference>
<dbReference type="CDD" id="cd00808">
    <property type="entry name" value="GluRS_core"/>
    <property type="match status" value="1"/>
</dbReference>
<dbReference type="Gene3D" id="1.10.10.350">
    <property type="match status" value="1"/>
</dbReference>
<dbReference type="Gene3D" id="1.10.8.70">
    <property type="entry name" value="Glutamate-tRNA synthetase, class I, anticodon-binding domain 1"/>
    <property type="match status" value="1"/>
</dbReference>
<dbReference type="Gene3D" id="1.10.1160.10">
    <property type="entry name" value="Glutamyl-trna Synthetase, Domain 2"/>
    <property type="match status" value="1"/>
</dbReference>
<dbReference type="Gene3D" id="3.90.800.10">
    <property type="entry name" value="Glutamyl-tRNA Synthetase, Domain 3"/>
    <property type="match status" value="1"/>
</dbReference>
<dbReference type="Gene3D" id="3.40.50.620">
    <property type="entry name" value="HUPs"/>
    <property type="match status" value="1"/>
</dbReference>
<dbReference type="HAMAP" id="MF_00022">
    <property type="entry name" value="Glu_tRNA_synth_type1"/>
    <property type="match status" value="1"/>
</dbReference>
<dbReference type="InterPro" id="IPR045462">
    <property type="entry name" value="aa-tRNA-synth_I_cd-bd"/>
</dbReference>
<dbReference type="InterPro" id="IPR020751">
    <property type="entry name" value="aa-tRNA-synth_I_codon-bd_sub2"/>
</dbReference>
<dbReference type="InterPro" id="IPR008925">
    <property type="entry name" value="aa_tRNA-synth_I_cd-bd_sf"/>
</dbReference>
<dbReference type="InterPro" id="IPR004527">
    <property type="entry name" value="Glu-tRNA-ligase_bac/mito"/>
</dbReference>
<dbReference type="InterPro" id="IPR020752">
    <property type="entry name" value="Glu-tRNA-synth_I_codon-bd_sub1"/>
</dbReference>
<dbReference type="InterPro" id="IPR000924">
    <property type="entry name" value="Glu/Gln-tRNA-synth"/>
</dbReference>
<dbReference type="InterPro" id="IPR020058">
    <property type="entry name" value="Glu/Gln-tRNA-synth_Ib_cat-dom"/>
</dbReference>
<dbReference type="InterPro" id="IPR020061">
    <property type="entry name" value="Glu_tRNA_lig_a-bdl"/>
</dbReference>
<dbReference type="InterPro" id="IPR049940">
    <property type="entry name" value="GluQ/Sye"/>
</dbReference>
<dbReference type="InterPro" id="IPR033910">
    <property type="entry name" value="GluRS_core"/>
</dbReference>
<dbReference type="InterPro" id="IPR014729">
    <property type="entry name" value="Rossmann-like_a/b/a_fold"/>
</dbReference>
<dbReference type="NCBIfam" id="TIGR00464">
    <property type="entry name" value="gltX_bact"/>
    <property type="match status" value="1"/>
</dbReference>
<dbReference type="PANTHER" id="PTHR43311">
    <property type="entry name" value="GLUTAMATE--TRNA LIGASE"/>
    <property type="match status" value="1"/>
</dbReference>
<dbReference type="PANTHER" id="PTHR43311:SF2">
    <property type="entry name" value="GLUTAMATE--TRNA LIGASE, MITOCHONDRIAL-RELATED"/>
    <property type="match status" value="1"/>
</dbReference>
<dbReference type="Pfam" id="PF19269">
    <property type="entry name" value="Anticodon_2"/>
    <property type="match status" value="1"/>
</dbReference>
<dbReference type="Pfam" id="PF00749">
    <property type="entry name" value="tRNA-synt_1c"/>
    <property type="match status" value="1"/>
</dbReference>
<dbReference type="PRINTS" id="PR00987">
    <property type="entry name" value="TRNASYNTHGLU"/>
</dbReference>
<dbReference type="SUPFAM" id="SSF48163">
    <property type="entry name" value="An anticodon-binding domain of class I aminoacyl-tRNA synthetases"/>
    <property type="match status" value="1"/>
</dbReference>
<dbReference type="SUPFAM" id="SSF52374">
    <property type="entry name" value="Nucleotidylyl transferase"/>
    <property type="match status" value="1"/>
</dbReference>
<comment type="function">
    <text evidence="1">Catalyzes the attachment of glutamate to tRNA(Glu) in a two-step reaction: glutamate is first activated by ATP to form Glu-AMP and then transferred to the acceptor end of tRNA(Glu).</text>
</comment>
<comment type="catalytic activity">
    <reaction evidence="1">
        <text>tRNA(Glu) + L-glutamate + ATP = L-glutamyl-tRNA(Glu) + AMP + diphosphate</text>
        <dbReference type="Rhea" id="RHEA:23540"/>
        <dbReference type="Rhea" id="RHEA-COMP:9663"/>
        <dbReference type="Rhea" id="RHEA-COMP:9680"/>
        <dbReference type="ChEBI" id="CHEBI:29985"/>
        <dbReference type="ChEBI" id="CHEBI:30616"/>
        <dbReference type="ChEBI" id="CHEBI:33019"/>
        <dbReference type="ChEBI" id="CHEBI:78442"/>
        <dbReference type="ChEBI" id="CHEBI:78520"/>
        <dbReference type="ChEBI" id="CHEBI:456215"/>
        <dbReference type="EC" id="6.1.1.17"/>
    </reaction>
</comment>
<comment type="subunit">
    <text evidence="1">Monomer.</text>
</comment>
<comment type="subcellular location">
    <subcellularLocation>
        <location evidence="1">Cytoplasm</location>
    </subcellularLocation>
</comment>
<comment type="similarity">
    <text evidence="1">Belongs to the class-I aminoacyl-tRNA synthetase family. Glutamate--tRNA ligase type 1 subfamily.</text>
</comment>
<protein>
    <recommendedName>
        <fullName evidence="1">Glutamate--tRNA ligase</fullName>
        <ecNumber evidence="1">6.1.1.17</ecNumber>
    </recommendedName>
    <alternativeName>
        <fullName evidence="1">Glutamyl-tRNA synthetase</fullName>
        <shortName evidence="1">GluRS</shortName>
    </alternativeName>
</protein>
<feature type="chain" id="PRO_0000119688" description="Glutamate--tRNA ligase">
    <location>
        <begin position="1"/>
        <end position="480"/>
    </location>
</feature>
<feature type="short sequence motif" description="'HIGH' region" evidence="1">
    <location>
        <begin position="12"/>
        <end position="22"/>
    </location>
</feature>
<feature type="short sequence motif" description="'KMSKS' region" evidence="1">
    <location>
        <begin position="255"/>
        <end position="259"/>
    </location>
</feature>
<feature type="binding site" evidence="1">
    <location>
        <position position="258"/>
    </location>
    <ligand>
        <name>ATP</name>
        <dbReference type="ChEBI" id="CHEBI:30616"/>
    </ligand>
</feature>
<organism>
    <name type="scientific">Tropheryma whipplei (strain TW08/27)</name>
    <name type="common">Whipple's bacillus</name>
    <dbReference type="NCBI Taxonomy" id="218496"/>
    <lineage>
        <taxon>Bacteria</taxon>
        <taxon>Bacillati</taxon>
        <taxon>Actinomycetota</taxon>
        <taxon>Actinomycetes</taxon>
        <taxon>Micrococcales</taxon>
        <taxon>Tropherymataceae</taxon>
        <taxon>Tropheryma</taxon>
    </lineage>
</organism>
<sequence length="480" mass="54801">MRDPRVRVRFCPSPTGAPHLGLVRTALFNWVFARKHGGGFIFRIEDTDATRNREESCSQLIDTLKWLGLDWDEGPDKGGQFGPYYQSQRGDIYQEVLDKLLAADLAYESFSTKEEIEKRNLEAGRPIQLGYDNYDRTLSEQTKAAMREAGRTPIIRLRMDDENIAFEDLVKGEVVFTDPIPDFALTRASGEPLYTLVNPVDDAFMKITHVLRGEDLLSSTPRQIALYKALITIGITDYVPFFGHLPIVMGEGNRKLSKRNPESDFYFYKARGFIREGLLNYLSLLGWSISNSRDTFSLSEMIHAFDVRDVRGNPARFDYKKCLAINAYHLRELNVEDFFLRLVPFVEEMLGIPLSFEQKNSLRAICPFVQGRVQLLTEAAEMVRFLLVDNISVDFAVTDKEIDVLRHCLALLNLLDTWESAQIASCIKQAIEQFDLQPKRIFSILRLAITGRRVSPPLFESMQILGRSASLNRVETFVTN</sequence>
<reference key="1">
    <citation type="journal article" date="2003" name="Lancet">
        <title>Sequencing and analysis of the genome of the Whipple's disease bacterium Tropheryma whipplei.</title>
        <authorList>
            <person name="Bentley S.D."/>
            <person name="Maiwald M."/>
            <person name="Murphy L.D."/>
            <person name="Pallen M.J."/>
            <person name="Yeats C.A."/>
            <person name="Dover L.G."/>
            <person name="Norbertczak H.T."/>
            <person name="Besra G.S."/>
            <person name="Quail M.A."/>
            <person name="Harris D.E."/>
            <person name="von Herbay A."/>
            <person name="Goble A."/>
            <person name="Rutter S."/>
            <person name="Squares R."/>
            <person name="Squares S."/>
            <person name="Barrell B.G."/>
            <person name="Parkhill J."/>
            <person name="Relman D.A."/>
        </authorList>
    </citation>
    <scope>NUCLEOTIDE SEQUENCE [LARGE SCALE GENOMIC DNA]</scope>
    <source>
        <strain>TW08/27</strain>
    </source>
</reference>
<gene>
    <name evidence="1" type="primary">gltX</name>
    <name type="ordered locus">TW563</name>
</gene>
<proteinExistence type="inferred from homology"/>
<name>SYE_TROW8</name>